<accession>A4XYG7</accession>
<gene>
    <name evidence="1" type="primary">lldD</name>
    <name type="ordered locus">Pmen_3635</name>
</gene>
<sequence>MIISASTDYRAAAERKLPPFLFHYADGGAYAEHTLRRNVADLSNIELRQRVLKNMSELDLSTELFGEKMSMPVGLAPVGLTGMYARRGEVQAAKAAAAKGIPFTLSTVSVCPIEEVAPAIDRPMWFQLYVLKDRGFMRNALERAKAAGCSTLVFTVDMPVPGARYRDAHSGMSGPNGPLRRVLQAMTHPQWAWDVGVMGKPHDLGNISAYRGNPTGLADYIGWLGANFDPSISWKDLEWIRDFWDGPMVIKGILDPEDARDAVTFGADGIIVSNHGGRQLDGVLSSARALPAIADAVKGELKILADSGIRTGLDVVRMLALGADTVLLGRAFIYALAVAGQAGVSNLLDLIEKEMRVAMVLTGAKSIAEITSDLLVKER</sequence>
<name>LLDD_ECTM1</name>
<reference key="1">
    <citation type="submission" date="2007-04" db="EMBL/GenBank/DDBJ databases">
        <title>Complete sequence of Pseudomonas mendocina ymp.</title>
        <authorList>
            <consortium name="US DOE Joint Genome Institute"/>
            <person name="Copeland A."/>
            <person name="Lucas S."/>
            <person name="Lapidus A."/>
            <person name="Barry K."/>
            <person name="Glavina del Rio T."/>
            <person name="Dalin E."/>
            <person name="Tice H."/>
            <person name="Pitluck S."/>
            <person name="Kiss H."/>
            <person name="Brettin T."/>
            <person name="Detter J.C."/>
            <person name="Bruce D."/>
            <person name="Han C."/>
            <person name="Schmutz J."/>
            <person name="Larimer F."/>
            <person name="Land M."/>
            <person name="Hauser L."/>
            <person name="Kyrpides N."/>
            <person name="Mikhailova N."/>
            <person name="Hersman L."/>
            <person name="Dubois J."/>
            <person name="Maurice P."/>
            <person name="Richardson P."/>
        </authorList>
    </citation>
    <scope>NUCLEOTIDE SEQUENCE [LARGE SCALE GENOMIC DNA]</scope>
    <source>
        <strain>ymp</strain>
    </source>
</reference>
<comment type="function">
    <text evidence="1">Catalyzes the conversion of L-lactate to pyruvate. Is coupled to the respiratory chain.</text>
</comment>
<comment type="catalytic activity">
    <reaction evidence="1">
        <text>(S)-lactate + A = pyruvate + AH2</text>
        <dbReference type="Rhea" id="RHEA:45816"/>
        <dbReference type="ChEBI" id="CHEBI:13193"/>
        <dbReference type="ChEBI" id="CHEBI:15361"/>
        <dbReference type="ChEBI" id="CHEBI:16651"/>
        <dbReference type="ChEBI" id="CHEBI:17499"/>
    </reaction>
</comment>
<comment type="cofactor">
    <cofactor evidence="1">
        <name>FMN</name>
        <dbReference type="ChEBI" id="CHEBI:58210"/>
    </cofactor>
</comment>
<comment type="subunit">
    <text evidence="1">Homotetramer.</text>
</comment>
<comment type="subcellular location">
    <subcellularLocation>
        <location evidence="1">Cell inner membrane</location>
        <topology evidence="1">Peripheral membrane protein</topology>
    </subcellularLocation>
</comment>
<comment type="similarity">
    <text evidence="1">Belongs to the FMN-dependent alpha-hydroxy acid dehydrogenase family.</text>
</comment>
<organism>
    <name type="scientific">Ectopseudomonas mendocina (strain ymp)</name>
    <name type="common">Pseudomonas mendocina</name>
    <dbReference type="NCBI Taxonomy" id="399739"/>
    <lineage>
        <taxon>Bacteria</taxon>
        <taxon>Pseudomonadati</taxon>
        <taxon>Pseudomonadota</taxon>
        <taxon>Gammaproteobacteria</taxon>
        <taxon>Pseudomonadales</taxon>
        <taxon>Pseudomonadaceae</taxon>
        <taxon>Ectopseudomonas</taxon>
    </lineage>
</organism>
<keyword id="KW-0997">Cell inner membrane</keyword>
<keyword id="KW-1003">Cell membrane</keyword>
<keyword id="KW-0285">Flavoprotein</keyword>
<keyword id="KW-0288">FMN</keyword>
<keyword id="KW-0472">Membrane</keyword>
<keyword id="KW-0560">Oxidoreductase</keyword>
<proteinExistence type="inferred from homology"/>
<protein>
    <recommendedName>
        <fullName evidence="1">L-lactate dehydrogenase</fullName>
        <ecNumber evidence="1">1.1.-.-</ecNumber>
    </recommendedName>
</protein>
<evidence type="ECO:0000255" key="1">
    <source>
        <dbReference type="HAMAP-Rule" id="MF_01559"/>
    </source>
</evidence>
<dbReference type="EC" id="1.1.-.-" evidence="1"/>
<dbReference type="EMBL" id="CP000680">
    <property type="protein sequence ID" value="ABP86383.1"/>
    <property type="molecule type" value="Genomic_DNA"/>
</dbReference>
<dbReference type="SMR" id="A4XYG7"/>
<dbReference type="STRING" id="399739.Pmen_3635"/>
<dbReference type="KEGG" id="pmy:Pmen_3635"/>
<dbReference type="PATRIC" id="fig|399739.8.peg.3684"/>
<dbReference type="eggNOG" id="COG1304">
    <property type="taxonomic scope" value="Bacteria"/>
</dbReference>
<dbReference type="HOGENOM" id="CLU_020639_0_0_6"/>
<dbReference type="OrthoDB" id="9770452at2"/>
<dbReference type="GO" id="GO:0005886">
    <property type="term" value="C:plasma membrane"/>
    <property type="evidence" value="ECO:0007669"/>
    <property type="project" value="UniProtKB-SubCell"/>
</dbReference>
<dbReference type="GO" id="GO:0010181">
    <property type="term" value="F:FMN binding"/>
    <property type="evidence" value="ECO:0007669"/>
    <property type="project" value="InterPro"/>
</dbReference>
<dbReference type="GO" id="GO:0004459">
    <property type="term" value="F:L-lactate dehydrogenase activity"/>
    <property type="evidence" value="ECO:0007669"/>
    <property type="project" value="UniProtKB-UniRule"/>
</dbReference>
<dbReference type="GO" id="GO:0009060">
    <property type="term" value="P:aerobic respiration"/>
    <property type="evidence" value="ECO:0007669"/>
    <property type="project" value="TreeGrafter"/>
</dbReference>
<dbReference type="GO" id="GO:0006089">
    <property type="term" value="P:lactate metabolic process"/>
    <property type="evidence" value="ECO:0007669"/>
    <property type="project" value="UniProtKB-UniRule"/>
</dbReference>
<dbReference type="CDD" id="cd02809">
    <property type="entry name" value="alpha_hydroxyacid_oxid_FMN"/>
    <property type="match status" value="1"/>
</dbReference>
<dbReference type="FunFam" id="3.20.20.70:FF:000029">
    <property type="entry name" value="L-lactate dehydrogenase"/>
    <property type="match status" value="1"/>
</dbReference>
<dbReference type="Gene3D" id="3.20.20.70">
    <property type="entry name" value="Aldolase class I"/>
    <property type="match status" value="1"/>
</dbReference>
<dbReference type="HAMAP" id="MF_01559">
    <property type="entry name" value="L_lact_dehydr"/>
    <property type="match status" value="1"/>
</dbReference>
<dbReference type="InterPro" id="IPR013785">
    <property type="entry name" value="Aldolase_TIM"/>
</dbReference>
<dbReference type="InterPro" id="IPR012133">
    <property type="entry name" value="Alpha-hydoxy_acid_DH_FMN"/>
</dbReference>
<dbReference type="InterPro" id="IPR000262">
    <property type="entry name" value="FMN-dep_DH"/>
</dbReference>
<dbReference type="InterPro" id="IPR037396">
    <property type="entry name" value="FMN_HAD"/>
</dbReference>
<dbReference type="InterPro" id="IPR008259">
    <property type="entry name" value="FMN_hydac_DH_AS"/>
</dbReference>
<dbReference type="InterPro" id="IPR020920">
    <property type="entry name" value="LldD"/>
</dbReference>
<dbReference type="NCBIfam" id="NF033901">
    <property type="entry name" value="L_lactate_LldD"/>
    <property type="match status" value="1"/>
</dbReference>
<dbReference type="NCBIfam" id="NF008398">
    <property type="entry name" value="PRK11197.1"/>
    <property type="match status" value="1"/>
</dbReference>
<dbReference type="PANTHER" id="PTHR10578:SF85">
    <property type="entry name" value="L-LACTATE DEHYDROGENASE"/>
    <property type="match status" value="1"/>
</dbReference>
<dbReference type="PANTHER" id="PTHR10578">
    <property type="entry name" value="S -2-HYDROXY-ACID OXIDASE-RELATED"/>
    <property type="match status" value="1"/>
</dbReference>
<dbReference type="Pfam" id="PF01070">
    <property type="entry name" value="FMN_dh"/>
    <property type="match status" value="1"/>
</dbReference>
<dbReference type="PIRSF" id="PIRSF000138">
    <property type="entry name" value="Al-hdrx_acd_dh"/>
    <property type="match status" value="1"/>
</dbReference>
<dbReference type="SUPFAM" id="SSF51395">
    <property type="entry name" value="FMN-linked oxidoreductases"/>
    <property type="match status" value="1"/>
</dbReference>
<dbReference type="PROSITE" id="PS00557">
    <property type="entry name" value="FMN_HYDROXY_ACID_DH_1"/>
    <property type="match status" value="1"/>
</dbReference>
<dbReference type="PROSITE" id="PS51349">
    <property type="entry name" value="FMN_HYDROXY_ACID_DH_2"/>
    <property type="match status" value="1"/>
</dbReference>
<feature type="chain" id="PRO_1000068991" description="L-lactate dehydrogenase">
    <location>
        <begin position="1"/>
        <end position="379"/>
    </location>
</feature>
<feature type="domain" description="FMN hydroxy acid dehydrogenase" evidence="1">
    <location>
        <begin position="1"/>
        <end position="379"/>
    </location>
</feature>
<feature type="active site" description="Proton acceptor" evidence="1">
    <location>
        <position position="275"/>
    </location>
</feature>
<feature type="binding site" evidence="1">
    <location>
        <position position="24"/>
    </location>
    <ligand>
        <name>substrate</name>
    </ligand>
</feature>
<feature type="binding site" evidence="1">
    <location>
        <position position="106"/>
    </location>
    <ligand>
        <name>FMN</name>
        <dbReference type="ChEBI" id="CHEBI:58210"/>
    </ligand>
</feature>
<feature type="binding site" evidence="1">
    <location>
        <position position="127"/>
    </location>
    <ligand>
        <name>FMN</name>
        <dbReference type="ChEBI" id="CHEBI:58210"/>
    </ligand>
</feature>
<feature type="binding site" evidence="1">
    <location>
        <position position="129"/>
    </location>
    <ligand>
        <name>substrate</name>
    </ligand>
</feature>
<feature type="binding site" evidence="1">
    <location>
        <position position="155"/>
    </location>
    <ligand>
        <name>FMN</name>
        <dbReference type="ChEBI" id="CHEBI:58210"/>
    </ligand>
</feature>
<feature type="binding site" evidence="1">
    <location>
        <position position="164"/>
    </location>
    <ligand>
        <name>substrate</name>
    </ligand>
</feature>
<feature type="binding site" evidence="1">
    <location>
        <position position="251"/>
    </location>
    <ligand>
        <name>FMN</name>
        <dbReference type="ChEBI" id="CHEBI:58210"/>
    </ligand>
</feature>
<feature type="binding site" evidence="1">
    <location>
        <position position="278"/>
    </location>
    <ligand>
        <name>substrate</name>
    </ligand>
</feature>
<feature type="binding site" evidence="1">
    <location>
        <begin position="306"/>
        <end position="330"/>
    </location>
    <ligand>
        <name>FMN</name>
        <dbReference type="ChEBI" id="CHEBI:58210"/>
    </ligand>
</feature>